<proteinExistence type="inferred from homology"/>
<gene>
    <name type="ordered locus">Teth39_0655</name>
</gene>
<comment type="similarity">
    <text evidence="1">Belongs to the UPF0251 family.</text>
</comment>
<evidence type="ECO:0000255" key="1">
    <source>
        <dbReference type="HAMAP-Rule" id="MF_00674"/>
    </source>
</evidence>
<name>Y655_THEP3</name>
<protein>
    <recommendedName>
        <fullName evidence="1">UPF0251 protein Teth39_0655</fullName>
    </recommendedName>
</protein>
<feature type="chain" id="PRO_1000131585" description="UPF0251 protein Teth39_0655">
    <location>
        <begin position="1"/>
        <end position="118"/>
    </location>
</feature>
<keyword id="KW-1185">Reference proteome</keyword>
<organism>
    <name type="scientific">Thermoanaerobacter pseudethanolicus (strain ATCC 33223 / 39E)</name>
    <name type="common">Clostridium thermohydrosulfuricum</name>
    <dbReference type="NCBI Taxonomy" id="340099"/>
    <lineage>
        <taxon>Bacteria</taxon>
        <taxon>Bacillati</taxon>
        <taxon>Bacillota</taxon>
        <taxon>Clostridia</taxon>
        <taxon>Thermoanaerobacterales</taxon>
        <taxon>Thermoanaerobacteraceae</taxon>
        <taxon>Thermoanaerobacter</taxon>
    </lineage>
</organism>
<accession>B0K7S0</accession>
<dbReference type="EMBL" id="CP000924">
    <property type="protein sequence ID" value="ABY94319.1"/>
    <property type="molecule type" value="Genomic_DNA"/>
</dbReference>
<dbReference type="RefSeq" id="WP_012269118.1">
    <property type="nucleotide sequence ID" value="NC_010321.1"/>
</dbReference>
<dbReference type="STRING" id="340099.Teth39_0655"/>
<dbReference type="KEGG" id="tpd:Teth39_0655"/>
<dbReference type="eggNOG" id="COG1342">
    <property type="taxonomic scope" value="Bacteria"/>
</dbReference>
<dbReference type="HOGENOM" id="CLU_094511_1_0_9"/>
<dbReference type="Proteomes" id="UP000002156">
    <property type="component" value="Chromosome"/>
</dbReference>
<dbReference type="Gene3D" id="1.10.10.10">
    <property type="entry name" value="Winged helix-like DNA-binding domain superfamily/Winged helix DNA-binding domain"/>
    <property type="match status" value="1"/>
</dbReference>
<dbReference type="HAMAP" id="MF_00674">
    <property type="entry name" value="UPF0251"/>
    <property type="match status" value="1"/>
</dbReference>
<dbReference type="InterPro" id="IPR013324">
    <property type="entry name" value="RNA_pol_sigma_r3/r4-like"/>
</dbReference>
<dbReference type="InterPro" id="IPR002852">
    <property type="entry name" value="UPF0251"/>
</dbReference>
<dbReference type="InterPro" id="IPR036388">
    <property type="entry name" value="WH-like_DNA-bd_sf"/>
</dbReference>
<dbReference type="PANTHER" id="PTHR37478">
    <property type="match status" value="1"/>
</dbReference>
<dbReference type="PANTHER" id="PTHR37478:SF2">
    <property type="entry name" value="UPF0251 PROTEIN TK0562"/>
    <property type="match status" value="1"/>
</dbReference>
<dbReference type="Pfam" id="PF02001">
    <property type="entry name" value="DUF134"/>
    <property type="match status" value="1"/>
</dbReference>
<dbReference type="SUPFAM" id="SSF88659">
    <property type="entry name" value="Sigma3 and sigma4 domains of RNA polymerase sigma factors"/>
    <property type="match status" value="1"/>
</dbReference>
<reference key="1">
    <citation type="submission" date="2008-01" db="EMBL/GenBank/DDBJ databases">
        <title>Complete sequence of Thermoanaerobacter pseudethanolicus 39E.</title>
        <authorList>
            <person name="Copeland A."/>
            <person name="Lucas S."/>
            <person name="Lapidus A."/>
            <person name="Barry K."/>
            <person name="Glavina del Rio T."/>
            <person name="Dalin E."/>
            <person name="Tice H."/>
            <person name="Pitluck S."/>
            <person name="Bruce D."/>
            <person name="Goodwin L."/>
            <person name="Saunders E."/>
            <person name="Brettin T."/>
            <person name="Detter J.C."/>
            <person name="Han C."/>
            <person name="Schmutz J."/>
            <person name="Larimer F."/>
            <person name="Land M."/>
            <person name="Hauser L."/>
            <person name="Kyrpides N."/>
            <person name="Lykidis A."/>
            <person name="Hemme C."/>
            <person name="Fields M.W."/>
            <person name="He Z."/>
            <person name="Zhou J."/>
            <person name="Richardson P."/>
        </authorList>
    </citation>
    <scope>NUCLEOTIDE SEQUENCE [LARGE SCALE GENOMIC DNA]</scope>
    <source>
        <strain>ATCC 33223 / DSM 2355 / 39E</strain>
    </source>
</reference>
<sequence>MPRPPKCRWVRSEPNVTHFKPVGVPMSMLDEVILTVEELEAIRLKDLEGLEQEECAEMMKVSRPTFFRIINSARQKVADALVNGKAIRVEGGNYRVYDEDQRGHRGMRHRHGQWGRED</sequence>